<comment type="function">
    <text evidence="1">Catalyzes the dephosphorylation of undecaprenyl diphosphate (UPP). Confers resistance to bacitracin.</text>
</comment>
<comment type="catalytic activity">
    <reaction evidence="1">
        <text>di-trans,octa-cis-undecaprenyl diphosphate + H2O = di-trans,octa-cis-undecaprenyl phosphate + phosphate + H(+)</text>
        <dbReference type="Rhea" id="RHEA:28094"/>
        <dbReference type="ChEBI" id="CHEBI:15377"/>
        <dbReference type="ChEBI" id="CHEBI:15378"/>
        <dbReference type="ChEBI" id="CHEBI:43474"/>
        <dbReference type="ChEBI" id="CHEBI:58405"/>
        <dbReference type="ChEBI" id="CHEBI:60392"/>
        <dbReference type="EC" id="3.6.1.27"/>
    </reaction>
</comment>
<comment type="subcellular location">
    <subcellularLocation>
        <location evidence="1">Cell inner membrane</location>
        <topology evidence="1">Multi-pass membrane protein</topology>
    </subcellularLocation>
</comment>
<comment type="miscellaneous">
    <text>Bacitracin is thought to be involved in the inhibition of peptidoglycan synthesis by sequestering undecaprenyl diphosphate, thereby reducing the pool of lipid carrier available.</text>
</comment>
<comment type="similarity">
    <text evidence="1">Belongs to the UppP family.</text>
</comment>
<dbReference type="EC" id="3.6.1.27" evidence="1"/>
<dbReference type="EMBL" id="AP009240">
    <property type="protein sequence ID" value="BAG78861.1"/>
    <property type="molecule type" value="Genomic_DNA"/>
</dbReference>
<dbReference type="SMR" id="B6I428"/>
<dbReference type="KEGG" id="ecy:ECSE_3337"/>
<dbReference type="HOGENOM" id="CLU_060296_2_0_6"/>
<dbReference type="Proteomes" id="UP000008199">
    <property type="component" value="Chromosome"/>
</dbReference>
<dbReference type="GO" id="GO:0005886">
    <property type="term" value="C:plasma membrane"/>
    <property type="evidence" value="ECO:0007669"/>
    <property type="project" value="UniProtKB-SubCell"/>
</dbReference>
<dbReference type="GO" id="GO:0050380">
    <property type="term" value="F:undecaprenyl-diphosphatase activity"/>
    <property type="evidence" value="ECO:0007669"/>
    <property type="project" value="UniProtKB-UniRule"/>
</dbReference>
<dbReference type="GO" id="GO:0071555">
    <property type="term" value="P:cell wall organization"/>
    <property type="evidence" value="ECO:0007669"/>
    <property type="project" value="UniProtKB-KW"/>
</dbReference>
<dbReference type="GO" id="GO:0009252">
    <property type="term" value="P:peptidoglycan biosynthetic process"/>
    <property type="evidence" value="ECO:0007669"/>
    <property type="project" value="UniProtKB-KW"/>
</dbReference>
<dbReference type="GO" id="GO:0008360">
    <property type="term" value="P:regulation of cell shape"/>
    <property type="evidence" value="ECO:0007669"/>
    <property type="project" value="UniProtKB-KW"/>
</dbReference>
<dbReference type="GO" id="GO:0046677">
    <property type="term" value="P:response to antibiotic"/>
    <property type="evidence" value="ECO:0007669"/>
    <property type="project" value="UniProtKB-UniRule"/>
</dbReference>
<dbReference type="HAMAP" id="MF_01006">
    <property type="entry name" value="Undec_diphosphatase"/>
    <property type="match status" value="1"/>
</dbReference>
<dbReference type="InterPro" id="IPR003824">
    <property type="entry name" value="UppP"/>
</dbReference>
<dbReference type="NCBIfam" id="NF001388">
    <property type="entry name" value="PRK00281.1-1"/>
    <property type="match status" value="1"/>
</dbReference>
<dbReference type="NCBIfam" id="NF001389">
    <property type="entry name" value="PRK00281.1-2"/>
    <property type="match status" value="1"/>
</dbReference>
<dbReference type="NCBIfam" id="NF001390">
    <property type="entry name" value="PRK00281.1-4"/>
    <property type="match status" value="1"/>
</dbReference>
<dbReference type="NCBIfam" id="TIGR00753">
    <property type="entry name" value="undec_PP_bacA"/>
    <property type="match status" value="1"/>
</dbReference>
<dbReference type="PANTHER" id="PTHR30622">
    <property type="entry name" value="UNDECAPRENYL-DIPHOSPHATASE"/>
    <property type="match status" value="1"/>
</dbReference>
<dbReference type="PANTHER" id="PTHR30622:SF3">
    <property type="entry name" value="UNDECAPRENYL-DIPHOSPHATASE"/>
    <property type="match status" value="1"/>
</dbReference>
<dbReference type="Pfam" id="PF02673">
    <property type="entry name" value="BacA"/>
    <property type="match status" value="1"/>
</dbReference>
<feature type="chain" id="PRO_1000197366" description="Undecaprenyl-diphosphatase">
    <location>
        <begin position="1"/>
        <end position="273"/>
    </location>
</feature>
<feature type="transmembrane region" description="Helical" evidence="1">
    <location>
        <begin position="6"/>
        <end position="26"/>
    </location>
</feature>
<feature type="transmembrane region" description="Helical" evidence="1">
    <location>
        <begin position="45"/>
        <end position="65"/>
    </location>
</feature>
<feature type="transmembrane region" description="Helical" evidence="1">
    <location>
        <begin position="90"/>
        <end position="110"/>
    </location>
</feature>
<feature type="transmembrane region" description="Helical" evidence="1">
    <location>
        <begin position="116"/>
        <end position="136"/>
    </location>
</feature>
<feature type="transmembrane region" description="Helical" evidence="1">
    <location>
        <begin position="190"/>
        <end position="210"/>
    </location>
</feature>
<feature type="transmembrane region" description="Helical" evidence="1">
    <location>
        <begin position="222"/>
        <end position="242"/>
    </location>
</feature>
<feature type="transmembrane region" description="Helical" evidence="1">
    <location>
        <begin position="252"/>
        <end position="272"/>
    </location>
</feature>
<accession>B6I428</accession>
<reference key="1">
    <citation type="journal article" date="2008" name="DNA Res.">
        <title>Complete genome sequence and comparative analysis of the wild-type commensal Escherichia coli strain SE11 isolated from a healthy adult.</title>
        <authorList>
            <person name="Oshima K."/>
            <person name="Toh H."/>
            <person name="Ogura Y."/>
            <person name="Sasamoto H."/>
            <person name="Morita H."/>
            <person name="Park S.-H."/>
            <person name="Ooka T."/>
            <person name="Iyoda S."/>
            <person name="Taylor T.D."/>
            <person name="Hayashi T."/>
            <person name="Itoh K."/>
            <person name="Hattori M."/>
        </authorList>
    </citation>
    <scope>NUCLEOTIDE SEQUENCE [LARGE SCALE GENOMIC DNA]</scope>
    <source>
        <strain>SE11</strain>
    </source>
</reference>
<sequence length="273" mass="29773">MSDMHSLLIAAILGVVEGLTEFLPVSSTGHMIIVGHLLGFEGDTAKTFEVVIQLGSILAVVVMFWRRLFGLIGIHFGRPLQHEGESKGRLTLIHILLGMIPAVVLGLLFHDTIKSLFNPINVMYALVVGGLLLIAAECLKPKEPRAPGLDDMTYRQAFMIGCFQCLALWPGFSRSGATISGGMLMGVSRYAASEFSFLLAVPMMMGATALDLYKSWGFLTTGDIPMFAVGFITAFVVALIAIKTFLQLIKRISFIPFAIYRFIVAAAVYVVFF</sequence>
<keyword id="KW-0046">Antibiotic resistance</keyword>
<keyword id="KW-0997">Cell inner membrane</keyword>
<keyword id="KW-1003">Cell membrane</keyword>
<keyword id="KW-0133">Cell shape</keyword>
<keyword id="KW-0961">Cell wall biogenesis/degradation</keyword>
<keyword id="KW-0378">Hydrolase</keyword>
<keyword id="KW-0472">Membrane</keyword>
<keyword id="KW-0573">Peptidoglycan synthesis</keyword>
<keyword id="KW-0812">Transmembrane</keyword>
<keyword id="KW-1133">Transmembrane helix</keyword>
<evidence type="ECO:0000255" key="1">
    <source>
        <dbReference type="HAMAP-Rule" id="MF_01006"/>
    </source>
</evidence>
<name>UPPP_ECOSE</name>
<protein>
    <recommendedName>
        <fullName evidence="1">Undecaprenyl-diphosphatase</fullName>
        <ecNumber evidence="1">3.6.1.27</ecNumber>
    </recommendedName>
    <alternativeName>
        <fullName evidence="1">Bacitracin resistance protein</fullName>
    </alternativeName>
    <alternativeName>
        <fullName evidence="1">Undecaprenyl pyrophosphate phosphatase</fullName>
    </alternativeName>
</protein>
<proteinExistence type="inferred from homology"/>
<organism>
    <name type="scientific">Escherichia coli (strain SE11)</name>
    <dbReference type="NCBI Taxonomy" id="409438"/>
    <lineage>
        <taxon>Bacteria</taxon>
        <taxon>Pseudomonadati</taxon>
        <taxon>Pseudomonadota</taxon>
        <taxon>Gammaproteobacteria</taxon>
        <taxon>Enterobacterales</taxon>
        <taxon>Enterobacteriaceae</taxon>
        <taxon>Escherichia</taxon>
    </lineage>
</organism>
<gene>
    <name evidence="1" type="primary">uppP</name>
    <name type="ordered locus">ECSE_3337</name>
</gene>